<name>XRRA1_BOVIN</name>
<reference evidence="4" key="1">
    <citation type="journal article" date="2001" name="Genome Res.">
        <title>Sequence evaluation of four pooled-tissue normalized bovine cDNA libraries and construction of a gene index for cattle.</title>
        <authorList>
            <person name="Smith T.P.L."/>
            <person name="Grosse W.M."/>
            <person name="Freking B.A."/>
            <person name="Roberts A.J."/>
            <person name="Stone R.T."/>
            <person name="Casas E."/>
            <person name="Wray J.E."/>
            <person name="White J."/>
            <person name="Cho J."/>
            <person name="Fahrenkrug S.C."/>
            <person name="Bennett G.L."/>
            <person name="Heaton M.P."/>
            <person name="Laegreid W.W."/>
            <person name="Rohrer G.A."/>
            <person name="Chitko-McKown C.G."/>
            <person name="Pertea G."/>
            <person name="Holt I."/>
            <person name="Karamycheva S."/>
            <person name="Liang F."/>
            <person name="Quackenbush J."/>
            <person name="Keele J.W."/>
        </authorList>
    </citation>
    <scope>NUCLEOTIDE SEQUENCE [MRNA]</scope>
</reference>
<reference evidence="4 5" key="2">
    <citation type="journal article" date="2003" name="BMC Genomics">
        <title>Molecular cloning, genomic characterization and over-expression of a novel gene, XRRA1, identified from human colorectal cancer cell HCT116Clone2_XRR and macaque testis.</title>
        <authorList>
            <person name="Mesak F.M."/>
            <person name="Osada N."/>
            <person name="Hashimoto K."/>
            <person name="Liu Q.Y."/>
            <person name="Ng C.E."/>
        </authorList>
    </citation>
    <scope>IDENTIFICATION</scope>
</reference>
<feature type="chain" id="PRO_0000318129" description="X-ray radiation resistance-associated protein 1">
    <location>
        <begin position="1" status="less than"/>
        <end position="549"/>
    </location>
</feature>
<feature type="repeat" description="LRR 1">
    <location>
        <begin position="37"/>
        <end position="58"/>
    </location>
</feature>
<feature type="repeat" description="LRR 2">
    <location>
        <begin position="62"/>
        <end position="83"/>
    </location>
</feature>
<feature type="region of interest" description="Disordered" evidence="3">
    <location>
        <begin position="221"/>
        <end position="242"/>
    </location>
</feature>
<feature type="region of interest" description="Disordered" evidence="3">
    <location>
        <begin position="277"/>
        <end position="329"/>
    </location>
</feature>
<feature type="region of interest" description="Disordered" evidence="3">
    <location>
        <begin position="347"/>
        <end position="384"/>
    </location>
</feature>
<feature type="coiled-coil region" evidence="2">
    <location>
        <begin position="480"/>
        <end position="500"/>
    </location>
</feature>
<feature type="compositionally biased region" description="Low complexity" evidence="3">
    <location>
        <begin position="227"/>
        <end position="236"/>
    </location>
</feature>
<feature type="compositionally biased region" description="Basic and acidic residues" evidence="3">
    <location>
        <begin position="348"/>
        <end position="360"/>
    </location>
</feature>
<feature type="non-terminal residue" evidence="4">
    <location>
        <position position="1"/>
    </location>
</feature>
<gene>
    <name evidence="5" type="primary">XRRA1</name>
</gene>
<evidence type="ECO:0000250" key="1">
    <source>
        <dbReference type="UniProtKB" id="Q6P2D8"/>
    </source>
</evidence>
<evidence type="ECO:0000255" key="2"/>
<evidence type="ECO:0000256" key="3">
    <source>
        <dbReference type="SAM" id="MobiDB-lite"/>
    </source>
</evidence>
<evidence type="ECO:0000305" key="4"/>
<evidence type="ECO:0000312" key="5">
    <source>
        <dbReference type="EMBL" id="DAA00382.1"/>
    </source>
</evidence>
<proteinExistence type="evidence at transcript level"/>
<keyword id="KW-0175">Coiled coil</keyword>
<keyword id="KW-0963">Cytoplasm</keyword>
<keyword id="KW-0433">Leucine-rich repeat</keyword>
<keyword id="KW-0539">Nucleus</keyword>
<keyword id="KW-1185">Reference proteome</keyword>
<keyword id="KW-0677">Repeat</keyword>
<comment type="function">
    <text evidence="1">May be involved in the response of cells to X-ray radiation.</text>
</comment>
<comment type="subcellular location">
    <subcellularLocation>
        <location evidence="1">Cytoplasm</location>
    </subcellularLocation>
    <subcellularLocation>
        <location evidence="1">Nucleus</location>
    </subcellularLocation>
</comment>
<comment type="sequence caution" evidence="4">
    <conflict type="erroneous initiation">
        <sequence resource="EMBL-CDS" id="DAA00382"/>
    </conflict>
</comment>
<protein>
    <recommendedName>
        <fullName>X-ray radiation resistance-associated protein 1</fullName>
    </recommendedName>
</protein>
<sequence length="549" mass="62037">LLTGNGLTSLPPSLAVAEQEASVTSLTTKRYILRFPALETLMLDDNKLSNPNCFVSLAGLKRLKKLSLDQNRIFRIPYLQQVQLRDGSGDWVGGRGSPRKQPQSMLQSKSWIYEASDDQPDYTILPMKKDVDRTEVVFSSYPGFSTSETTKVCALPPIFAILPVALFPSLCELIFHNNPLVAHTRGVPPLLKSFLQERVGIHLIRRKIVKAKHHILMPRKDSRKVKTQVPKVPKQPMILPHPSVMIKSPSKEMLESEAELTTEPPPTKTISVEREMPIEGLGGPPMPHRTFVPLPPICSDSTVHSEETSPRSDAAGRLSADQLSDEDTKSTESIFLTQVSGLSSSIFQRDDSEIKEKEQRPPSTAPREAKRTQKKPPSASFPRKYHGYEELLTAKPDRPCSTCVKHPLVYRSSKPRLDTLQKHYVPKEKRTRRIPVPPRRKTRAQLLDDILIRMRDTQNITEAPLGAVLRQRTEQRLVNQKQFLEAKKLLKEFRARYRRLVRCSLRSVFGTTAPPQARPALSGSQPKLGRFLEFMDEFYQEPTASDLKG</sequence>
<organism>
    <name type="scientific">Bos taurus</name>
    <name type="common">Bovine</name>
    <dbReference type="NCBI Taxonomy" id="9913"/>
    <lineage>
        <taxon>Eukaryota</taxon>
        <taxon>Metazoa</taxon>
        <taxon>Chordata</taxon>
        <taxon>Craniata</taxon>
        <taxon>Vertebrata</taxon>
        <taxon>Euteleostomi</taxon>
        <taxon>Mammalia</taxon>
        <taxon>Eutheria</taxon>
        <taxon>Laurasiatheria</taxon>
        <taxon>Artiodactyla</taxon>
        <taxon>Ruminantia</taxon>
        <taxon>Pecora</taxon>
        <taxon>Bovidae</taxon>
        <taxon>Bovinae</taxon>
        <taxon>Bos</taxon>
    </lineage>
</organism>
<accession>Q7PCK7</accession>
<dbReference type="EMBL" id="BE722755">
    <property type="status" value="NOT_ANNOTATED_CDS"/>
    <property type="molecule type" value="mRNA"/>
</dbReference>
<dbReference type="EMBL" id="BI540915">
    <property type="status" value="NOT_ANNOTATED_CDS"/>
    <property type="molecule type" value="mRNA"/>
</dbReference>
<dbReference type="EMBL" id="BM106446">
    <property type="status" value="NOT_ANNOTATED_CDS"/>
    <property type="molecule type" value="mRNA"/>
</dbReference>
<dbReference type="EMBL" id="BM254248">
    <property type="status" value="NOT_ANNOTATED_CDS"/>
    <property type="molecule type" value="mRNA"/>
</dbReference>
<dbReference type="EMBL" id="BK000644">
    <property type="protein sequence ID" value="DAA00382.1"/>
    <property type="status" value="ALT_INIT"/>
    <property type="molecule type" value="mRNA"/>
</dbReference>
<dbReference type="RefSeq" id="NP_976069.1">
    <property type="nucleotide sequence ID" value="NM_203324.1"/>
</dbReference>
<dbReference type="SMR" id="Q7PCK7"/>
<dbReference type="FunCoup" id="Q7PCK7">
    <property type="interactions" value="59"/>
</dbReference>
<dbReference type="STRING" id="9913.ENSBTAP00000053271"/>
<dbReference type="PaxDb" id="9913-ENSBTAP00000053271"/>
<dbReference type="KEGG" id="bta:369019"/>
<dbReference type="CTD" id="143570"/>
<dbReference type="eggNOG" id="KOG0619">
    <property type="taxonomic scope" value="Eukaryota"/>
</dbReference>
<dbReference type="InParanoid" id="Q7PCK7"/>
<dbReference type="OrthoDB" id="1687175at2759"/>
<dbReference type="Proteomes" id="UP000009136">
    <property type="component" value="Unplaced"/>
</dbReference>
<dbReference type="GO" id="GO:0005737">
    <property type="term" value="C:cytoplasm"/>
    <property type="evidence" value="ECO:0000250"/>
    <property type="project" value="UniProtKB"/>
</dbReference>
<dbReference type="GO" id="GO:0005634">
    <property type="term" value="C:nucleus"/>
    <property type="evidence" value="ECO:0000250"/>
    <property type="project" value="UniProtKB"/>
</dbReference>
<dbReference type="GO" id="GO:0010165">
    <property type="term" value="P:response to X-ray"/>
    <property type="evidence" value="ECO:0000250"/>
    <property type="project" value="UniProtKB"/>
</dbReference>
<dbReference type="FunFam" id="3.80.10.10:FF:002122">
    <property type="entry name" value="X-ray radiation resistance-associated protein 1"/>
    <property type="match status" value="1"/>
</dbReference>
<dbReference type="Gene3D" id="3.80.10.10">
    <property type="entry name" value="Ribonuclease Inhibitor"/>
    <property type="match status" value="1"/>
</dbReference>
<dbReference type="InterPro" id="IPR001611">
    <property type="entry name" value="Leu-rich_rpt"/>
</dbReference>
<dbReference type="InterPro" id="IPR032675">
    <property type="entry name" value="LRR_dom_sf"/>
</dbReference>
<dbReference type="PANTHER" id="PTHR22710">
    <property type="entry name" value="X-RAY RADIATION RESISTANCE ASSOCIATED PROTEIN 1 XRRA1"/>
    <property type="match status" value="1"/>
</dbReference>
<dbReference type="PANTHER" id="PTHR22710:SF2">
    <property type="entry name" value="X-RAY RADIATION RESISTANCE-ASSOCIATED PROTEIN 1"/>
    <property type="match status" value="1"/>
</dbReference>
<dbReference type="SUPFAM" id="SSF52058">
    <property type="entry name" value="L domain-like"/>
    <property type="match status" value="1"/>
</dbReference>
<dbReference type="PROSITE" id="PS51450">
    <property type="entry name" value="LRR"/>
    <property type="match status" value="2"/>
</dbReference>